<gene>
    <name type="primary">Espl1</name>
    <name type="synonym">Esp1</name>
    <name type="synonym">Kiaa0165</name>
</gene>
<accession>P60330</accession>
<accession>A6H6E3</accession>
<evidence type="ECO:0000250" key="1"/>
<evidence type="ECO:0000250" key="2">
    <source>
        <dbReference type="UniProtKB" id="Q14674"/>
    </source>
</evidence>
<evidence type="ECO:0000256" key="3">
    <source>
        <dbReference type="SAM" id="MobiDB-lite"/>
    </source>
</evidence>
<evidence type="ECO:0000305" key="4"/>
<evidence type="ECO:0007744" key="5">
    <source>
    </source>
</evidence>
<protein>
    <recommendedName>
        <fullName>Separin</fullName>
        <ecNumber>3.4.22.49</ecNumber>
    </recommendedName>
    <alternativeName>
        <fullName>Caspase-like protein ESPL1</fullName>
    </alternativeName>
    <alternativeName>
        <fullName>Extra spindle poles-like 1 protein</fullName>
    </alternativeName>
    <alternativeName>
        <fullName>Separase</fullName>
    </alternativeName>
</protein>
<feature type="chain" id="PRO_0000205901" description="Separin">
    <location>
        <begin position="1"/>
        <end position="2118"/>
    </location>
</feature>
<feature type="domain" description="Peptidase C50">
    <location>
        <begin position="1941"/>
        <end position="2036"/>
    </location>
</feature>
<feature type="region of interest" description="Disordered" evidence="3">
    <location>
        <begin position="1309"/>
        <end position="1352"/>
    </location>
</feature>
<feature type="region of interest" description="Disordered" evidence="3">
    <location>
        <begin position="1408"/>
        <end position="1428"/>
    </location>
</feature>
<feature type="compositionally biased region" description="Basic residues" evidence="3">
    <location>
        <begin position="1309"/>
        <end position="1318"/>
    </location>
</feature>
<feature type="active site" evidence="1">
    <location>
        <position position="2025"/>
    </location>
</feature>
<feature type="site" description="Cleavage; by autolysis" evidence="1">
    <location>
        <begin position="1502"/>
        <end position="1503"/>
    </location>
</feature>
<feature type="site" description="Cleavage; by autolysis" evidence="1">
    <location>
        <begin position="1531"/>
        <end position="1532"/>
    </location>
</feature>
<feature type="modified residue" description="Phosphoserine" evidence="2">
    <location>
        <position position="1121"/>
    </location>
</feature>
<feature type="modified residue" description="Phosphoserine" evidence="2">
    <location>
        <position position="1391"/>
    </location>
</feature>
<feature type="modified residue" description="Phosphoserine" evidence="2">
    <location>
        <position position="1394"/>
    </location>
</feature>
<feature type="modified residue" description="Phosphoserine" evidence="5">
    <location>
        <position position="1504"/>
    </location>
</feature>
<reference key="1">
    <citation type="journal article" date="2003" name="DNA Res.">
        <title>Prediction of the coding sequences of mouse homologues of KIAA gene: III. The complete nucleotide sequences of 500 mouse KIAA-homologous cDNAs identified by screening of terminal sequences of cDNA clones randomly sampled from size-fractionated libraries.</title>
        <authorList>
            <person name="Okazaki N."/>
            <person name="Kikuno R."/>
            <person name="Ohara R."/>
            <person name="Inamoto S."/>
            <person name="Koseki H."/>
            <person name="Hiraoka S."/>
            <person name="Saga Y."/>
            <person name="Nagase T."/>
            <person name="Ohara O."/>
            <person name="Koga H."/>
        </authorList>
    </citation>
    <scope>NUCLEOTIDE SEQUENCE [LARGE SCALE MRNA]</scope>
    <source>
        <tissue>Embryonic tail</tissue>
    </source>
</reference>
<reference key="2">
    <citation type="journal article" date="2004" name="Genome Res.">
        <title>The status, quality, and expansion of the NIH full-length cDNA project: the Mammalian Gene Collection (MGC).</title>
        <authorList>
            <consortium name="The MGC Project Team"/>
        </authorList>
    </citation>
    <scope>NUCLEOTIDE SEQUENCE [LARGE SCALE MRNA]</scope>
    <source>
        <tissue>Brain</tissue>
    </source>
</reference>
<reference key="3">
    <citation type="submission" date="2009-01" db="UniProtKB">
        <authorList>
            <person name="Lubec G."/>
            <person name="Sunyer B."/>
            <person name="Chen W.-Q."/>
        </authorList>
    </citation>
    <scope>PROTEIN SEQUENCE OF 1241-1260</scope>
    <scope>IDENTIFICATION BY MASS SPECTROMETRY</scope>
    <source>
        <strain>OF1</strain>
        <tissue>Hippocampus</tissue>
    </source>
</reference>
<reference key="4">
    <citation type="journal article" date="2009" name="Immunity">
        <title>The phagosomal proteome in interferon-gamma-activated macrophages.</title>
        <authorList>
            <person name="Trost M."/>
            <person name="English L."/>
            <person name="Lemieux S."/>
            <person name="Courcelles M."/>
            <person name="Desjardins M."/>
            <person name="Thibault P."/>
        </authorList>
    </citation>
    <scope>IDENTIFICATION BY MASS SPECTROMETRY [LARGE SCALE ANALYSIS]</scope>
</reference>
<reference key="5">
    <citation type="journal article" date="2010" name="Cell">
        <title>A tissue-specific atlas of mouse protein phosphorylation and expression.</title>
        <authorList>
            <person name="Huttlin E.L."/>
            <person name="Jedrychowski M.P."/>
            <person name="Elias J.E."/>
            <person name="Goswami T."/>
            <person name="Rad R."/>
            <person name="Beausoleil S.A."/>
            <person name="Villen J."/>
            <person name="Haas W."/>
            <person name="Sowa M.E."/>
            <person name="Gygi S.P."/>
        </authorList>
    </citation>
    <scope>PHOSPHORYLATION [LARGE SCALE ANALYSIS] AT SER-1504</scope>
    <scope>IDENTIFICATION BY MASS SPECTROMETRY [LARGE SCALE ANALYSIS]</scope>
    <source>
        <tissue>Spleen</tissue>
        <tissue>Testis</tissue>
    </source>
</reference>
<keyword id="KW-0068">Autocatalytic cleavage</keyword>
<keyword id="KW-0159">Chromosome partition</keyword>
<keyword id="KW-0963">Cytoplasm</keyword>
<keyword id="KW-0903">Direct protein sequencing</keyword>
<keyword id="KW-0378">Hydrolase</keyword>
<keyword id="KW-0539">Nucleus</keyword>
<keyword id="KW-0597">Phosphoprotein</keyword>
<keyword id="KW-0645">Protease</keyword>
<keyword id="KW-1185">Reference proteome</keyword>
<keyword id="KW-0788">Thiol protease</keyword>
<organism>
    <name type="scientific">Mus musculus</name>
    <name type="common">Mouse</name>
    <dbReference type="NCBI Taxonomy" id="10090"/>
    <lineage>
        <taxon>Eukaryota</taxon>
        <taxon>Metazoa</taxon>
        <taxon>Chordata</taxon>
        <taxon>Craniata</taxon>
        <taxon>Vertebrata</taxon>
        <taxon>Euteleostomi</taxon>
        <taxon>Mammalia</taxon>
        <taxon>Eutheria</taxon>
        <taxon>Euarchontoglires</taxon>
        <taxon>Glires</taxon>
        <taxon>Rodentia</taxon>
        <taxon>Myomorpha</taxon>
        <taxon>Muroidea</taxon>
        <taxon>Muridae</taxon>
        <taxon>Murinae</taxon>
        <taxon>Mus</taxon>
        <taxon>Mus</taxon>
    </lineage>
</organism>
<name>ESPL1_MOUSE</name>
<sequence>MRNFKGVNFATLLCSKEETQQLLPDLKEFLSRSRTDFPSSRTDAERRQICDTILRACTQQLTAKLDCPGHLRSILDLAELACDGYLLSTPQRPPLYLERILFILLRNGSTQGSPDTVLRLAQPLHACLVQNSGEAAPQDYEAVTRGSFSLFWKGAEALLERRAAFSTRLNALSFLVLLEDGSVPCEVPHFASPTACRLVAAYQLYDATGQGLDEADADFLYEVLSRHLIRVLVGEGGSSPGPLSPQRALCLLEITLEHCRRLCWNHHHRQAARAVERARNHLEKTSVAPSLQLCQMGVELLEAVEERPGAVAQLLRKAAAVLINSIEAPSPPLRALYDSCQFFLSGLERGIRRHCGLDAILSLFAFLGGYSSLVRHLREVSEASSKQQQCLLQMHFQGFHLFTGIVYDFAQGCQATELAQLVDGCRSAAVWMLEALEGLSGGELADYLSMTASYTSNLAYSFFSQKLYEEACVISEPVCQHLGSATSGACPEVPPEKLHRCFRLHVESLKKLGKQAQGCKMVTLWLAALKPYSLEHMVEPVTFWVRVKMDASRAGDKELQLQTLRDSLSCWDPETQSLLLREELRAYKSVRADTGQERFNIICDLLELSPEETAAGAWARATYLVELAQVLCYHNFTQQTNCSALDAVQEALQLLESVSPEAQEQDRLLDDKAQALLWLYICTLEAKMQEGIERDRRAQAPSNLEEFEVNDLNYEDKLQEDRFLYSSIAFNLAADAAQSKCLDQALTLWKEVLTKGRAPAVRCLQQTAASLQILAAVYQLVAKPLQALETLLLLQIVSKRLQDHAKAASSSCQLTQLLLNLGCPSYAQLYLEEAESSLRSLDQTSDACQLLSLTCALLGSQLCWACQKVTAGVSLLLSVLRDPALQKSSKAWYLLRVQALQVLAFYLSLSSNLLSSALREQLWDQGWQTPETALIDAHKLLRSIIILLMGSDVLSIQKAATESPFLDYGENLVQKWQVLTEVLTCSERLVGRLGRLGNVSEAKAFCLEALKLTTKLQIPRQCALFLVLKGELELARGDIDLCQSDLQQVLFLLESSTEFGVVTQHPDSVKKVHTQKGKHKAQGPCFPPLSEEEPFLKGPALELVDTVLNEPGPIQSSVNSSPVLKTKPPPNPGFLSHLPSCDCLLCASPALSAVCLRWVLVTAGVRLATGHKAQGLDLLQAVLTRCPAATKRFTQSLQASLNHRTTPSCVPSLFDEIMAQVYTHLALEFLNQTSEKSLGKVLASGLKFVATRIQSLEIWRAHLLLVQALAKLAHFSCCTSELFASSWGWHPPLVKSLPVLEPAKIRRQKCSGRGRRRIASVPPPLHNSSQKGLEEEGPPCTPKPPGRARQAGPRVPFTIFEEVHPTKSKLQVPLAPRVHRRAQTRLKVIFSDDSDLEDLVSADTQLVEEPKRRGTASRTRGQTRKGRSLKTDAVVAIESTPGHSSVSGRTRRARKVASRNCEEESPKAPLCVWASQGPEIMRSIPEEEPVDNHLEKSFEILRGSDGEDSASGEKAAAADTGLPVGECEVLRRDSSKAERPVLYSDTEANSDPSPWLPPFSVPAPIDLSTLDSISDSLSIAFRGVSHCPPSGLYAHLCRFLALCLGHRDPYATAFLVAESISITCRHQLLTHLHRQLSKAQKQQESPELAEHLQRLDLKERPGGVPLARIQRLFSFKALGSGCFPQAEKESFQERLALIPSGVTVCVLALATLQPGTLSNTLLLTRLEKDNPPITVKIPTAQNKLPLSAVLKEFDAIQKDQKENSSCTEKRVWWTGRLALDQRMEALITALEEQVLGCWRGLLLPCSADPSLAQEASKLQELLRECGWEYPDSTLLKVILSGARILTSQDVQALACGLCPAQPDRAQVLLSEAVGQVQSQEAPRSQHLVLVLDKDLQKLPWESTPILQAQPVTRLPSFRFLLSYTVTKEAGASSVLSQGVDPQNTFYVLNPHSNLSSTEERFRASFSSETGWKGVIGEVPSLDQVQAALTERDLYIYAGHGAGARFLDGQAVLRLSCRAVALLFGCSSAALAVHGNLEGAGIVLKYIMAGCPLFLGNLWDVTDRDIDRYTEALLQGWLGAGPGAPFLYYASQARQAPRLKYLIGAAPVAYGLPISLQTP</sequence>
<dbReference type="EC" id="3.4.22.49"/>
<dbReference type="EMBL" id="AK129072">
    <property type="protein sequence ID" value="BAC97882.1"/>
    <property type="status" value="ALT_INIT"/>
    <property type="molecule type" value="mRNA"/>
</dbReference>
<dbReference type="EMBL" id="BC145846">
    <property type="protein sequence ID" value="AAI45847.1"/>
    <property type="molecule type" value="mRNA"/>
</dbReference>
<dbReference type="CCDS" id="CCDS27878.1"/>
<dbReference type="RefSeq" id="NP_001014976.1">
    <property type="nucleotide sequence ID" value="NM_001014976.2"/>
</dbReference>
<dbReference type="RefSeq" id="NP_001343241.1">
    <property type="nucleotide sequence ID" value="NM_001356312.1"/>
</dbReference>
<dbReference type="RefSeq" id="XP_006520320.1">
    <property type="nucleotide sequence ID" value="XM_006520257.3"/>
</dbReference>
<dbReference type="RefSeq" id="XP_006520321.1">
    <property type="nucleotide sequence ID" value="XM_006520258.5"/>
</dbReference>
<dbReference type="RefSeq" id="XP_006520322.1">
    <property type="nucleotide sequence ID" value="XM_006520259.5"/>
</dbReference>
<dbReference type="RefSeq" id="XP_011243698.1">
    <property type="nucleotide sequence ID" value="XM_011245396.2"/>
</dbReference>
<dbReference type="RefSeq" id="XP_036014955.1">
    <property type="nucleotide sequence ID" value="XM_036159062.1"/>
</dbReference>
<dbReference type="SMR" id="P60330"/>
<dbReference type="BioGRID" id="222968">
    <property type="interactions" value="28"/>
</dbReference>
<dbReference type="FunCoup" id="P60330">
    <property type="interactions" value="1227"/>
</dbReference>
<dbReference type="IntAct" id="P60330">
    <property type="interactions" value="26"/>
</dbReference>
<dbReference type="STRING" id="10090.ENSMUSP00000064465"/>
<dbReference type="MEROPS" id="C50.002"/>
<dbReference type="GlyGen" id="P60330">
    <property type="glycosylation" value="2 sites"/>
</dbReference>
<dbReference type="iPTMnet" id="P60330"/>
<dbReference type="PhosphoSitePlus" id="P60330"/>
<dbReference type="SwissPalm" id="P60330"/>
<dbReference type="jPOST" id="P60330"/>
<dbReference type="PaxDb" id="10090-ENSMUSP00000064465"/>
<dbReference type="ProteomicsDB" id="275543"/>
<dbReference type="Pumba" id="P60330"/>
<dbReference type="Antibodypedia" id="26971">
    <property type="antibodies" value="662 antibodies from 29 providers"/>
</dbReference>
<dbReference type="Ensembl" id="ENSMUST00000064924.6">
    <property type="protein sequence ID" value="ENSMUSP00000064465.5"/>
    <property type="gene ID" value="ENSMUSG00000058290.5"/>
</dbReference>
<dbReference type="Ensembl" id="ENSMUST00000229050.2">
    <property type="protein sequence ID" value="ENSMUSP00000155304.2"/>
    <property type="gene ID" value="ENSMUSG00000058290.5"/>
</dbReference>
<dbReference type="GeneID" id="105988"/>
<dbReference type="KEGG" id="mmu:105988"/>
<dbReference type="UCSC" id="uc007xvf.2">
    <property type="organism name" value="mouse"/>
</dbReference>
<dbReference type="AGR" id="MGI:2146156"/>
<dbReference type="CTD" id="9700"/>
<dbReference type="MGI" id="MGI:2146156">
    <property type="gene designation" value="Espl1"/>
</dbReference>
<dbReference type="VEuPathDB" id="HostDB:ENSMUSG00000058290"/>
<dbReference type="eggNOG" id="KOG1849">
    <property type="taxonomic scope" value="Eukaryota"/>
</dbReference>
<dbReference type="GeneTree" id="ENSGT00390000004990"/>
<dbReference type="HOGENOM" id="CLU_001558_0_0_1"/>
<dbReference type="InParanoid" id="P60330"/>
<dbReference type="OMA" id="YMGMTAS"/>
<dbReference type="OrthoDB" id="10255632at2759"/>
<dbReference type="PhylomeDB" id="P60330"/>
<dbReference type="TreeFam" id="TF101169"/>
<dbReference type="BRENDA" id="3.4.22.49">
    <property type="organism ID" value="3474"/>
</dbReference>
<dbReference type="Reactome" id="R-MMU-2467813">
    <property type="pathway name" value="Separation of Sister Chromatids"/>
</dbReference>
<dbReference type="BioGRID-ORCS" id="105988">
    <property type="hits" value="29 hits in 82 CRISPR screens"/>
</dbReference>
<dbReference type="ChiTaRS" id="Espl1">
    <property type="organism name" value="mouse"/>
</dbReference>
<dbReference type="PRO" id="PR:P60330"/>
<dbReference type="Proteomes" id="UP000000589">
    <property type="component" value="Chromosome 15"/>
</dbReference>
<dbReference type="RNAct" id="P60330">
    <property type="molecule type" value="protein"/>
</dbReference>
<dbReference type="Bgee" id="ENSMUSG00000058290">
    <property type="expression patterns" value="Expressed in dorsal pancreas and 176 other cell types or tissues"/>
</dbReference>
<dbReference type="ExpressionAtlas" id="P60330">
    <property type="expression patterns" value="baseline and differential"/>
</dbReference>
<dbReference type="GO" id="GO:0005813">
    <property type="term" value="C:centrosome"/>
    <property type="evidence" value="ECO:0007669"/>
    <property type="project" value="Ensembl"/>
</dbReference>
<dbReference type="GO" id="GO:0005737">
    <property type="term" value="C:cytoplasm"/>
    <property type="evidence" value="ECO:0007669"/>
    <property type="project" value="UniProtKB-SubCell"/>
</dbReference>
<dbReference type="GO" id="GO:0005634">
    <property type="term" value="C:nucleus"/>
    <property type="evidence" value="ECO:0007669"/>
    <property type="project" value="UniProtKB-SubCell"/>
</dbReference>
<dbReference type="GO" id="GO:0004197">
    <property type="term" value="F:cysteine-type endopeptidase activity"/>
    <property type="evidence" value="ECO:0007669"/>
    <property type="project" value="InterPro"/>
</dbReference>
<dbReference type="GO" id="GO:0008234">
    <property type="term" value="F:cysteine-type peptidase activity"/>
    <property type="evidence" value="ECO:0000314"/>
    <property type="project" value="MGI"/>
</dbReference>
<dbReference type="GO" id="GO:0008233">
    <property type="term" value="F:peptidase activity"/>
    <property type="evidence" value="ECO:0000314"/>
    <property type="project" value="MGI"/>
</dbReference>
<dbReference type="GO" id="GO:0007059">
    <property type="term" value="P:chromosome segregation"/>
    <property type="evidence" value="ECO:0000316"/>
    <property type="project" value="MGI"/>
</dbReference>
<dbReference type="GO" id="GO:0045143">
    <property type="term" value="P:homologous chromosome segregation"/>
    <property type="evidence" value="ECO:0000315"/>
    <property type="project" value="MGI"/>
</dbReference>
<dbReference type="GO" id="GO:0007127">
    <property type="term" value="P:meiosis I"/>
    <property type="evidence" value="ECO:0000315"/>
    <property type="project" value="MGI"/>
</dbReference>
<dbReference type="GO" id="GO:0000212">
    <property type="term" value="P:meiotic spindle organization"/>
    <property type="evidence" value="ECO:0000315"/>
    <property type="project" value="MGI"/>
</dbReference>
<dbReference type="GO" id="GO:0000278">
    <property type="term" value="P:mitotic cell cycle"/>
    <property type="evidence" value="ECO:0000316"/>
    <property type="project" value="MGI"/>
</dbReference>
<dbReference type="GO" id="GO:0000070">
    <property type="term" value="P:mitotic sister chromatid segregation"/>
    <property type="evidence" value="ECO:0000315"/>
    <property type="project" value="MGI"/>
</dbReference>
<dbReference type="GO" id="GO:0006508">
    <property type="term" value="P:proteolysis"/>
    <property type="evidence" value="ECO:0007669"/>
    <property type="project" value="UniProtKB-KW"/>
</dbReference>
<dbReference type="InterPro" id="IPR005314">
    <property type="entry name" value="Peptidase_C50"/>
</dbReference>
<dbReference type="InterPro" id="IPR030397">
    <property type="entry name" value="SEPARIN_core_dom"/>
</dbReference>
<dbReference type="PANTHER" id="PTHR12792">
    <property type="entry name" value="EXTRA SPINDLE POLES 1-RELATED"/>
    <property type="match status" value="1"/>
</dbReference>
<dbReference type="PANTHER" id="PTHR12792:SF0">
    <property type="entry name" value="SEPARIN"/>
    <property type="match status" value="1"/>
</dbReference>
<dbReference type="Pfam" id="PF03568">
    <property type="entry name" value="Peptidase_C50"/>
    <property type="match status" value="1"/>
</dbReference>
<dbReference type="PROSITE" id="PS51700">
    <property type="entry name" value="SEPARIN"/>
    <property type="match status" value="1"/>
</dbReference>
<proteinExistence type="evidence at protein level"/>
<comment type="function">
    <text evidence="1">Caspase-like protease, which plays a central role in the chromosome segregation by cleaving the SCC1/RAD21 subunit of the cohesin complex at the onset of anaphase. During most of the cell cycle, it is inactivated by different mechanisms (By similarity).</text>
</comment>
<comment type="catalytic activity">
    <reaction>
        <text>All bonds known to be hydrolyzed by this endopeptidase have arginine in P1 and an acidic residue in P4. P6 is often occupied by an acidic residue or by a hydroxy-amino-acid residue, the phosphorylation of which enhances cleavage.</text>
        <dbReference type="EC" id="3.4.22.49"/>
    </reaction>
</comment>
<comment type="activity regulation">
    <text evidence="1">Regulated by at least two independent mechanisms. First, it is inactivated via its interaction with securin/PTTG1, which probably covers its active site. The association with PTTG1 is not only inhibitory, since PTTG1 is also required for activating it, the enzyme being inactive in cells in which PTTG1 is absent. PTTG1 degradation at anaphase, liberates it and triggers RAD21 cleavage. Second, phosphorylation at Ser-1121 inactivates it. The complete phosphorylation during mitosis, is removed when cells undergo anaphase. Activation of the enzyme at the metaphase-anaphase transition probably requires the removal of both securin and inhibitory phosphate (By similarity).</text>
</comment>
<comment type="subunit">
    <text evidence="1">Interacts with PTTG1. Interacts with RAD21 (By similarity).</text>
</comment>
<comment type="subcellular location">
    <subcellularLocation>
        <location evidence="1">Cytoplasm</location>
    </subcellularLocation>
    <subcellularLocation>
        <location evidence="1">Nucleus</location>
    </subcellularLocation>
</comment>
<comment type="PTM">
    <text evidence="1">Autocleaves. This function, which is not essential for its protease activity, is unknown (By similarity).</text>
</comment>
<comment type="PTM">
    <text evidence="1">Phosphorylated by CDK1. There is 8 Ser/Thr phosphorylation sites. Among them, only Ser-1121 phosphorylation is the major site, which conducts to the enzyme inactivation (By similarity).</text>
</comment>
<comment type="sequence caution" evidence="4">
    <conflict type="erroneous initiation">
        <sequence resource="EMBL-CDS" id="BAC97882"/>
    </conflict>
    <text>Extended N-terminus.</text>
</comment>